<sequence length="544" mass="57460">MAKDIKFSEEARRSMLRGVDTLANAVKVTLGPKGRNVVLEKKFGSPLITNDGVTIAKEIELEDAFENMGAKLVAEVASKTNDVAGDGTTTATVLAQAMIREGLKNVTAGANPMGLRKGIEKAVTAAIEELKTISKPIEGKSSIAQVAAISAADEEVGQLIAEAMERVGNDGVITLEESKGFTTELDVVEGMQFDRGYASPYMITDSDKMEAVLDNPYILITDKKISNIQEILPVLEQVVQQGKPLLIIAEDVEGEALATLVVNKLRGTFNVVAVKAPGFGDRRKAMLEDIAILTGGEVITEELGRDLKSATVESLGRAGKVVVTKENTTVVEGIGNTQQIEARIGQIRAQLEETTSEFDREKLQERLAKLAGGVAVIKVGAATETELKERKLRIEDALNSTRAAVEEGIVAGGGTSLMNVYTKVASIVAEGDEATGINIVLRALEEPVRQIAINAGLEGSVVVERLKGEKVGVGFNAATGEWVNMLETGIVDPAKVTRSALQNAASVAAMFLTTEAVVADKPEPNAPAMPDMGGMGMGGMGGMM</sequence>
<organism>
    <name type="scientific">Bacillus cereus</name>
    <dbReference type="NCBI Taxonomy" id="1396"/>
    <lineage>
        <taxon>Bacteria</taxon>
        <taxon>Bacillati</taxon>
        <taxon>Bacillota</taxon>
        <taxon>Bacilli</taxon>
        <taxon>Bacillales</taxon>
        <taxon>Bacillaceae</taxon>
        <taxon>Bacillus</taxon>
        <taxon>Bacillus cereus group</taxon>
    </lineage>
</organism>
<protein>
    <recommendedName>
        <fullName evidence="1">Chaperonin GroEL</fullName>
        <ecNumber evidence="1">5.6.1.7</ecNumber>
    </recommendedName>
    <alternativeName>
        <fullName evidence="1">60 kDa chaperonin</fullName>
    </alternativeName>
    <alternativeName>
        <fullName evidence="1">Chaperonin-60</fullName>
        <shortName evidence="1">Cpn60</shortName>
    </alternativeName>
</protein>
<reference key="1">
    <citation type="journal article" date="2004" name="Proc. Natl. Acad. Sci. U.S.A.">
        <title>Identification of anthrax toxin genes in a Bacillus cereus associated with an illness resembling inhalation anthrax.</title>
        <authorList>
            <person name="Hoffmaster A.R."/>
            <person name="Ravel J."/>
            <person name="Rasko D.A."/>
            <person name="Chapman G.D."/>
            <person name="Chute M.D."/>
            <person name="Marston C.K."/>
            <person name="De B.K."/>
            <person name="Sacchi C.T."/>
            <person name="Fitzgerald C."/>
            <person name="Mayer L.W."/>
            <person name="Maiden M.C.J."/>
            <person name="Priest F.G."/>
            <person name="Barker M."/>
            <person name="Jiang L."/>
            <person name="Cer R.Z."/>
            <person name="Rilstone J."/>
            <person name="Peterson S.N."/>
            <person name="Weyant R.S."/>
            <person name="Galloway D.R."/>
            <person name="Read T.D."/>
            <person name="Popovic T."/>
            <person name="Fraser C.M."/>
        </authorList>
    </citation>
    <scope>NUCLEOTIDE SEQUENCE [GENOMIC DNA]</scope>
    <source>
        <strain>G9241</strain>
    </source>
</reference>
<reference key="2">
    <citation type="journal article" date="2001" name="J. Appl. Microbiol.">
        <title>Heat and salt stress in the food pathogen Bacillus cereus.</title>
        <authorList>
            <person name="Browne N."/>
            <person name="Dowds B.C.A."/>
        </authorList>
    </citation>
    <scope>PROTEIN SEQUENCE OF 2-21</scope>
    <scope>INDUCTION</scope>
    <source>
        <strain>DSM 626 / NCIMB 11796 / T</strain>
    </source>
</reference>
<dbReference type="EC" id="5.6.1.7" evidence="1"/>
<dbReference type="EMBL" id="AAEK01000017">
    <property type="protein sequence ID" value="EAL14249.1"/>
    <property type="molecule type" value="Genomic_DNA"/>
</dbReference>
<dbReference type="RefSeq" id="WP_001975554.1">
    <property type="nucleotide sequence ID" value="NZ_VEFJ01000018.1"/>
</dbReference>
<dbReference type="SMR" id="Q4MPR6"/>
<dbReference type="GeneID" id="93010770"/>
<dbReference type="eggNOG" id="COG0459">
    <property type="taxonomic scope" value="Bacteria"/>
</dbReference>
<dbReference type="GO" id="GO:0005737">
    <property type="term" value="C:cytoplasm"/>
    <property type="evidence" value="ECO:0007669"/>
    <property type="project" value="UniProtKB-SubCell"/>
</dbReference>
<dbReference type="GO" id="GO:0005524">
    <property type="term" value="F:ATP binding"/>
    <property type="evidence" value="ECO:0007669"/>
    <property type="project" value="UniProtKB-UniRule"/>
</dbReference>
<dbReference type="GO" id="GO:0140662">
    <property type="term" value="F:ATP-dependent protein folding chaperone"/>
    <property type="evidence" value="ECO:0007669"/>
    <property type="project" value="InterPro"/>
</dbReference>
<dbReference type="GO" id="GO:0016853">
    <property type="term" value="F:isomerase activity"/>
    <property type="evidence" value="ECO:0007669"/>
    <property type="project" value="UniProtKB-KW"/>
</dbReference>
<dbReference type="GO" id="GO:0051082">
    <property type="term" value="F:unfolded protein binding"/>
    <property type="evidence" value="ECO:0007669"/>
    <property type="project" value="UniProtKB-UniRule"/>
</dbReference>
<dbReference type="GO" id="GO:0042026">
    <property type="term" value="P:protein refolding"/>
    <property type="evidence" value="ECO:0007669"/>
    <property type="project" value="UniProtKB-UniRule"/>
</dbReference>
<dbReference type="CDD" id="cd03344">
    <property type="entry name" value="GroEL"/>
    <property type="match status" value="1"/>
</dbReference>
<dbReference type="FunFam" id="1.10.560.10:FF:000001">
    <property type="entry name" value="60 kDa chaperonin"/>
    <property type="match status" value="1"/>
</dbReference>
<dbReference type="FunFam" id="3.50.7.10:FF:000001">
    <property type="entry name" value="60 kDa chaperonin"/>
    <property type="match status" value="1"/>
</dbReference>
<dbReference type="Gene3D" id="3.50.7.10">
    <property type="entry name" value="GroEL"/>
    <property type="match status" value="1"/>
</dbReference>
<dbReference type="Gene3D" id="1.10.560.10">
    <property type="entry name" value="GroEL-like equatorial domain"/>
    <property type="match status" value="1"/>
</dbReference>
<dbReference type="Gene3D" id="3.30.260.10">
    <property type="entry name" value="TCP-1-like chaperonin intermediate domain"/>
    <property type="match status" value="1"/>
</dbReference>
<dbReference type="HAMAP" id="MF_00600">
    <property type="entry name" value="CH60"/>
    <property type="match status" value="1"/>
</dbReference>
<dbReference type="InterPro" id="IPR018370">
    <property type="entry name" value="Chaperonin_Cpn60_CS"/>
</dbReference>
<dbReference type="InterPro" id="IPR001844">
    <property type="entry name" value="Cpn60/GroEL"/>
</dbReference>
<dbReference type="InterPro" id="IPR002423">
    <property type="entry name" value="Cpn60/GroEL/TCP-1"/>
</dbReference>
<dbReference type="InterPro" id="IPR027409">
    <property type="entry name" value="GroEL-like_apical_dom_sf"/>
</dbReference>
<dbReference type="InterPro" id="IPR027413">
    <property type="entry name" value="GROEL-like_equatorial_sf"/>
</dbReference>
<dbReference type="InterPro" id="IPR027410">
    <property type="entry name" value="TCP-1-like_intermed_sf"/>
</dbReference>
<dbReference type="NCBIfam" id="TIGR02348">
    <property type="entry name" value="GroEL"/>
    <property type="match status" value="1"/>
</dbReference>
<dbReference type="NCBIfam" id="NF000592">
    <property type="entry name" value="PRK00013.1"/>
    <property type="match status" value="1"/>
</dbReference>
<dbReference type="NCBIfam" id="NF009487">
    <property type="entry name" value="PRK12849.1"/>
    <property type="match status" value="1"/>
</dbReference>
<dbReference type="NCBIfam" id="NF009488">
    <property type="entry name" value="PRK12850.1"/>
    <property type="match status" value="1"/>
</dbReference>
<dbReference type="NCBIfam" id="NF009489">
    <property type="entry name" value="PRK12851.1"/>
    <property type="match status" value="1"/>
</dbReference>
<dbReference type="PANTHER" id="PTHR45633">
    <property type="entry name" value="60 KDA HEAT SHOCK PROTEIN, MITOCHONDRIAL"/>
    <property type="match status" value="1"/>
</dbReference>
<dbReference type="Pfam" id="PF00118">
    <property type="entry name" value="Cpn60_TCP1"/>
    <property type="match status" value="1"/>
</dbReference>
<dbReference type="PRINTS" id="PR00298">
    <property type="entry name" value="CHAPERONIN60"/>
</dbReference>
<dbReference type="SUPFAM" id="SSF52029">
    <property type="entry name" value="GroEL apical domain-like"/>
    <property type="match status" value="1"/>
</dbReference>
<dbReference type="SUPFAM" id="SSF48592">
    <property type="entry name" value="GroEL equatorial domain-like"/>
    <property type="match status" value="1"/>
</dbReference>
<dbReference type="SUPFAM" id="SSF54849">
    <property type="entry name" value="GroEL-intermediate domain like"/>
    <property type="match status" value="1"/>
</dbReference>
<dbReference type="PROSITE" id="PS00296">
    <property type="entry name" value="CHAPERONINS_CPN60"/>
    <property type="match status" value="1"/>
</dbReference>
<name>CH60_BACCE</name>
<keyword id="KW-0067">ATP-binding</keyword>
<keyword id="KW-0143">Chaperone</keyword>
<keyword id="KW-0963">Cytoplasm</keyword>
<keyword id="KW-0903">Direct protein sequencing</keyword>
<keyword id="KW-0413">Isomerase</keyword>
<keyword id="KW-0547">Nucleotide-binding</keyword>
<keyword id="KW-0346">Stress response</keyword>
<accession>Q4MPR6</accession>
<accession>P83074</accession>
<comment type="function">
    <text evidence="1">Together with its co-chaperonin GroES, plays an essential role in assisting protein folding. The GroEL-GroES system forms a nano-cage that allows encapsulation of the non-native substrate proteins and provides a physical environment optimized to promote and accelerate protein folding.</text>
</comment>
<comment type="catalytic activity">
    <reaction evidence="1">
        <text>ATP + H2O + a folded polypeptide = ADP + phosphate + an unfolded polypeptide.</text>
        <dbReference type="EC" id="5.6.1.7"/>
    </reaction>
</comment>
<comment type="subunit">
    <text evidence="1">Forms a cylinder of 14 subunits composed of two heptameric rings stacked back-to-back. Interacts with the co-chaperonin GroES.</text>
</comment>
<comment type="subcellular location">
    <subcellularLocation>
        <location evidence="1">Cytoplasm</location>
    </subcellularLocation>
</comment>
<comment type="induction">
    <text evidence="2">By heat shock.</text>
</comment>
<comment type="similarity">
    <text evidence="1">Belongs to the chaperonin (HSP60) family.</text>
</comment>
<gene>
    <name evidence="1" type="primary">groEL</name>
    <name evidence="1" type="synonym">groL</name>
    <name type="ORF">BCE_G9241_0261</name>
</gene>
<proteinExistence type="evidence at protein level"/>
<feature type="initiator methionine" description="Removed" evidence="2">
    <location>
        <position position="1"/>
    </location>
</feature>
<feature type="chain" id="PRO_0000271238" description="Chaperonin GroEL">
    <location>
        <begin position="2"/>
        <end position="544"/>
    </location>
</feature>
<feature type="binding site" evidence="1">
    <location>
        <begin position="29"/>
        <end position="32"/>
    </location>
    <ligand>
        <name>ATP</name>
        <dbReference type="ChEBI" id="CHEBI:30616"/>
    </ligand>
</feature>
<feature type="binding site" evidence="1">
    <location>
        <begin position="86"/>
        <end position="90"/>
    </location>
    <ligand>
        <name>ATP</name>
        <dbReference type="ChEBI" id="CHEBI:30616"/>
    </ligand>
</feature>
<feature type="binding site" evidence="1">
    <location>
        <position position="413"/>
    </location>
    <ligand>
        <name>ATP</name>
        <dbReference type="ChEBI" id="CHEBI:30616"/>
    </ligand>
</feature>
<feature type="binding site" evidence="1">
    <location>
        <begin position="476"/>
        <end position="478"/>
    </location>
    <ligand>
        <name>ATP</name>
        <dbReference type="ChEBI" id="CHEBI:30616"/>
    </ligand>
</feature>
<feature type="binding site" evidence="1">
    <location>
        <position position="492"/>
    </location>
    <ligand>
        <name>ATP</name>
        <dbReference type="ChEBI" id="CHEBI:30616"/>
    </ligand>
</feature>
<feature type="sequence conflict" description="In Ref. 2; AA sequence." evidence="3" ref="2">
    <original>D</original>
    <variation>N</variation>
    <location>
        <position position="4"/>
    </location>
</feature>
<feature type="sequence conflict" description="In Ref. 2; AA sequence." evidence="3" ref="2">
    <original>EE</original>
    <variation>QQ</variation>
    <location>
        <begin position="9"/>
        <end position="10"/>
    </location>
</feature>
<evidence type="ECO:0000255" key="1">
    <source>
        <dbReference type="HAMAP-Rule" id="MF_00600"/>
    </source>
</evidence>
<evidence type="ECO:0000269" key="2">
    <source>
    </source>
</evidence>
<evidence type="ECO:0000305" key="3"/>